<name>IHFB_XYLF2</name>
<organism>
    <name type="scientific">Xylella fastidiosa (strain M23)</name>
    <dbReference type="NCBI Taxonomy" id="405441"/>
    <lineage>
        <taxon>Bacteria</taxon>
        <taxon>Pseudomonadati</taxon>
        <taxon>Pseudomonadota</taxon>
        <taxon>Gammaproteobacteria</taxon>
        <taxon>Lysobacterales</taxon>
        <taxon>Lysobacteraceae</taxon>
        <taxon>Xylella</taxon>
    </lineage>
</organism>
<evidence type="ECO:0000255" key="1">
    <source>
        <dbReference type="HAMAP-Rule" id="MF_00381"/>
    </source>
</evidence>
<proteinExistence type="inferred from homology"/>
<reference key="1">
    <citation type="journal article" date="2010" name="J. Bacteriol.">
        <title>Whole genome sequences of two Xylella fastidiosa strains (M12 and M23) causing almond leaf scorch disease in California.</title>
        <authorList>
            <person name="Chen J."/>
            <person name="Xie G."/>
            <person name="Han S."/>
            <person name="Chertkov O."/>
            <person name="Sims D."/>
            <person name="Civerolo E.L."/>
        </authorList>
    </citation>
    <scope>NUCLEOTIDE SEQUENCE [LARGE SCALE GENOMIC DNA]</scope>
    <source>
        <strain>M23</strain>
    </source>
</reference>
<gene>
    <name evidence="1" type="primary">ihfB</name>
    <name evidence="1" type="synonym">himD</name>
    <name type="ordered locus">XfasM23_1539</name>
</gene>
<dbReference type="EMBL" id="CP001011">
    <property type="protein sequence ID" value="ACB92947.1"/>
    <property type="molecule type" value="Genomic_DNA"/>
</dbReference>
<dbReference type="RefSeq" id="WP_004088432.1">
    <property type="nucleotide sequence ID" value="NC_010577.1"/>
</dbReference>
<dbReference type="SMR" id="B2I6X0"/>
<dbReference type="KEGG" id="xfn:XfasM23_1539"/>
<dbReference type="HOGENOM" id="CLU_105066_2_0_6"/>
<dbReference type="Proteomes" id="UP000001698">
    <property type="component" value="Chromosome"/>
</dbReference>
<dbReference type="GO" id="GO:0005694">
    <property type="term" value="C:chromosome"/>
    <property type="evidence" value="ECO:0007669"/>
    <property type="project" value="InterPro"/>
</dbReference>
<dbReference type="GO" id="GO:0005829">
    <property type="term" value="C:cytosol"/>
    <property type="evidence" value="ECO:0007669"/>
    <property type="project" value="TreeGrafter"/>
</dbReference>
<dbReference type="GO" id="GO:0003677">
    <property type="term" value="F:DNA binding"/>
    <property type="evidence" value="ECO:0007669"/>
    <property type="project" value="UniProtKB-UniRule"/>
</dbReference>
<dbReference type="GO" id="GO:0030527">
    <property type="term" value="F:structural constituent of chromatin"/>
    <property type="evidence" value="ECO:0007669"/>
    <property type="project" value="InterPro"/>
</dbReference>
<dbReference type="GO" id="GO:0006310">
    <property type="term" value="P:DNA recombination"/>
    <property type="evidence" value="ECO:0007669"/>
    <property type="project" value="UniProtKB-UniRule"/>
</dbReference>
<dbReference type="GO" id="GO:0006355">
    <property type="term" value="P:regulation of DNA-templated transcription"/>
    <property type="evidence" value="ECO:0007669"/>
    <property type="project" value="UniProtKB-UniRule"/>
</dbReference>
<dbReference type="GO" id="GO:0006417">
    <property type="term" value="P:regulation of translation"/>
    <property type="evidence" value="ECO:0007669"/>
    <property type="project" value="UniProtKB-UniRule"/>
</dbReference>
<dbReference type="CDD" id="cd13836">
    <property type="entry name" value="IHF_B"/>
    <property type="match status" value="1"/>
</dbReference>
<dbReference type="FunFam" id="4.10.520.10:FF:000003">
    <property type="entry name" value="Integration host factor subunit beta"/>
    <property type="match status" value="1"/>
</dbReference>
<dbReference type="Gene3D" id="4.10.520.10">
    <property type="entry name" value="IHF-like DNA-binding proteins"/>
    <property type="match status" value="1"/>
</dbReference>
<dbReference type="HAMAP" id="MF_00381">
    <property type="entry name" value="IHF_beta"/>
    <property type="match status" value="1"/>
</dbReference>
<dbReference type="InterPro" id="IPR000119">
    <property type="entry name" value="Hist_DNA-bd"/>
</dbReference>
<dbReference type="InterPro" id="IPR020816">
    <property type="entry name" value="Histone-like_DNA-bd_CS"/>
</dbReference>
<dbReference type="InterPro" id="IPR010992">
    <property type="entry name" value="IHF-like_DNA-bd_dom_sf"/>
</dbReference>
<dbReference type="InterPro" id="IPR005685">
    <property type="entry name" value="IHF_beta"/>
</dbReference>
<dbReference type="NCBIfam" id="TIGR00988">
    <property type="entry name" value="hip"/>
    <property type="match status" value="1"/>
</dbReference>
<dbReference type="NCBIfam" id="NF001222">
    <property type="entry name" value="PRK00199.1"/>
    <property type="match status" value="1"/>
</dbReference>
<dbReference type="PANTHER" id="PTHR33175">
    <property type="entry name" value="DNA-BINDING PROTEIN HU"/>
    <property type="match status" value="1"/>
</dbReference>
<dbReference type="PANTHER" id="PTHR33175:SF5">
    <property type="entry name" value="INTEGRATION HOST FACTOR SUBUNIT BETA"/>
    <property type="match status" value="1"/>
</dbReference>
<dbReference type="Pfam" id="PF00216">
    <property type="entry name" value="Bac_DNA_binding"/>
    <property type="match status" value="1"/>
</dbReference>
<dbReference type="PRINTS" id="PR01727">
    <property type="entry name" value="DNABINDINGHU"/>
</dbReference>
<dbReference type="SMART" id="SM00411">
    <property type="entry name" value="BHL"/>
    <property type="match status" value="1"/>
</dbReference>
<dbReference type="SUPFAM" id="SSF47729">
    <property type="entry name" value="IHF-like DNA-binding proteins"/>
    <property type="match status" value="1"/>
</dbReference>
<dbReference type="PROSITE" id="PS00045">
    <property type="entry name" value="HISTONE_LIKE"/>
    <property type="match status" value="1"/>
</dbReference>
<comment type="function">
    <text evidence="1">This protein is one of the two subunits of integration host factor, a specific DNA-binding protein that functions in genetic recombination as well as in transcriptional and translational control.</text>
</comment>
<comment type="subunit">
    <text evidence="1">Heterodimer of an alpha and a beta chain.</text>
</comment>
<comment type="similarity">
    <text evidence="1">Belongs to the bacterial histone-like protein family.</text>
</comment>
<keyword id="KW-0233">DNA recombination</keyword>
<keyword id="KW-0238">DNA-binding</keyword>
<keyword id="KW-0804">Transcription</keyword>
<keyword id="KW-0805">Transcription regulation</keyword>
<keyword id="KW-0810">Translation regulation</keyword>
<sequence length="104" mass="11377">MTKSELIEILTKRQAHLKSDDVDLAVKSLLEMMGGALSGGDRIEIRGFGSFSLHYRPPRCGRNPKTGESVALPGKYVPHFKPGKELRERVASVVPLGECGDITE</sequence>
<feature type="chain" id="PRO_1000122251" description="Integration host factor subunit beta">
    <location>
        <begin position="1"/>
        <end position="104"/>
    </location>
</feature>
<protein>
    <recommendedName>
        <fullName evidence="1">Integration host factor subunit beta</fullName>
        <shortName evidence="1">IHF-beta</shortName>
    </recommendedName>
</protein>
<accession>B2I6X0</accession>